<dbReference type="EMBL" id="AF495718">
    <property type="protein sequence ID" value="AAM88775.1"/>
    <property type="molecule type" value="mRNA"/>
</dbReference>
<dbReference type="EMBL" id="AF495719">
    <property type="protein sequence ID" value="AAM88776.1"/>
    <property type="molecule type" value="mRNA"/>
</dbReference>
<dbReference type="CCDS" id="CCDS38438.1">
    <molecule id="Q8K445-1"/>
</dbReference>
<dbReference type="CCDS" id="CCDS38439.1">
    <molecule id="Q8K445-2"/>
</dbReference>
<dbReference type="RefSeq" id="NP_700433.1">
    <molecule id="Q8K445-2"/>
    <property type="nucleotide sequence ID" value="NM_153384.3"/>
</dbReference>
<dbReference type="RefSeq" id="NP_700434.1">
    <molecule id="Q8K445-1"/>
    <property type="nucleotide sequence ID" value="NM_153385.3"/>
</dbReference>
<dbReference type="RefSeq" id="NP_700435.1">
    <property type="nucleotide sequence ID" value="NM_153386.3"/>
</dbReference>
<dbReference type="FunCoup" id="Q8K445">
    <property type="interactions" value="19"/>
</dbReference>
<dbReference type="STRING" id="10090.ENSMUSP00000052254"/>
<dbReference type="GlyCosmos" id="Q8K445">
    <property type="glycosylation" value="2 sites, No reported glycans"/>
</dbReference>
<dbReference type="GlyGen" id="Q8K445">
    <property type="glycosylation" value="2 sites"/>
</dbReference>
<dbReference type="iPTMnet" id="Q8K445"/>
<dbReference type="PhosphoSitePlus" id="Q8K445"/>
<dbReference type="PaxDb" id="10090-ENSMUSP00000052254"/>
<dbReference type="Antibodypedia" id="52945">
    <property type="antibodies" value="32 antibodies from 11 providers"/>
</dbReference>
<dbReference type="DNASU" id="229320"/>
<dbReference type="Ensembl" id="ENSMUST00000051408.8">
    <molecule id="Q8K445-1"/>
    <property type="protein sequence ID" value="ENSMUSP00000051738.8"/>
    <property type="gene ID" value="ENSMUSG00000043850.16"/>
</dbReference>
<dbReference type="Ensembl" id="ENSMUST00000055636.13">
    <molecule id="Q8K445-2"/>
    <property type="protein sequence ID" value="ENSMUSP00000052254.7"/>
    <property type="gene ID" value="ENSMUSG00000043850.16"/>
</dbReference>
<dbReference type="GeneID" id="229320"/>
<dbReference type="KEGG" id="mmu:229320"/>
<dbReference type="UCSC" id="uc008pid.2">
    <molecule id="Q8K445-2"/>
    <property type="organism name" value="mouse"/>
</dbReference>
<dbReference type="UCSC" id="uc008pie.2">
    <molecule id="Q8K445-1"/>
    <property type="organism name" value="mouse"/>
</dbReference>
<dbReference type="AGR" id="MGI:2388124"/>
<dbReference type="CTD" id="7401"/>
<dbReference type="MGI" id="MGI:2388124">
    <property type="gene designation" value="Clrn1"/>
</dbReference>
<dbReference type="VEuPathDB" id="HostDB:ENSMUSG00000043850"/>
<dbReference type="eggNOG" id="ENOG502QQVB">
    <property type="taxonomic scope" value="Eukaryota"/>
</dbReference>
<dbReference type="GeneTree" id="ENSGT00850000132319"/>
<dbReference type="InParanoid" id="Q8K445"/>
<dbReference type="OMA" id="IIFCTAG"/>
<dbReference type="OrthoDB" id="17730at9989"/>
<dbReference type="PhylomeDB" id="Q8K445"/>
<dbReference type="TreeFam" id="TF331875"/>
<dbReference type="BioGRID-ORCS" id="229320">
    <property type="hits" value="0 hits in 77 CRISPR screens"/>
</dbReference>
<dbReference type="PRO" id="PR:Q8K445"/>
<dbReference type="Proteomes" id="UP000000589">
    <property type="component" value="Chromosome 3"/>
</dbReference>
<dbReference type="RNAct" id="Q8K445">
    <property type="molecule type" value="protein"/>
</dbReference>
<dbReference type="Bgee" id="ENSMUSG00000043850">
    <property type="expression patterns" value="Expressed in otolith organ and 31 other cell types or tissues"/>
</dbReference>
<dbReference type="ExpressionAtlas" id="Q8K445">
    <property type="expression patterns" value="baseline and differential"/>
</dbReference>
<dbReference type="GO" id="GO:0045178">
    <property type="term" value="C:basal part of cell"/>
    <property type="evidence" value="ECO:0000314"/>
    <property type="project" value="MGI"/>
</dbReference>
<dbReference type="GO" id="GO:0030027">
    <property type="term" value="C:lamellipodium"/>
    <property type="evidence" value="ECO:0000266"/>
    <property type="project" value="MGI"/>
</dbReference>
<dbReference type="GO" id="GO:0015630">
    <property type="term" value="C:microtubule cytoskeleton"/>
    <property type="evidence" value="ECO:0000314"/>
    <property type="project" value="MGI"/>
</dbReference>
<dbReference type="GO" id="GO:0005902">
    <property type="term" value="C:microvillus"/>
    <property type="evidence" value="ECO:0000266"/>
    <property type="project" value="MGI"/>
</dbReference>
<dbReference type="GO" id="GO:0005886">
    <property type="term" value="C:plasma membrane"/>
    <property type="evidence" value="ECO:0000266"/>
    <property type="project" value="MGI"/>
</dbReference>
<dbReference type="GO" id="GO:0032420">
    <property type="term" value="C:stereocilium"/>
    <property type="evidence" value="ECO:0000314"/>
    <property type="project" value="MGI"/>
</dbReference>
<dbReference type="GO" id="GO:0030140">
    <property type="term" value="C:trans-Golgi network transport vesicle"/>
    <property type="evidence" value="ECO:0000314"/>
    <property type="project" value="MGI"/>
</dbReference>
<dbReference type="GO" id="GO:0007015">
    <property type="term" value="P:actin filament organization"/>
    <property type="evidence" value="ECO:0000266"/>
    <property type="project" value="MGI"/>
</dbReference>
<dbReference type="GO" id="GO:0060117">
    <property type="term" value="P:auditory receptor cell development"/>
    <property type="evidence" value="ECO:0000315"/>
    <property type="project" value="MGI"/>
</dbReference>
<dbReference type="GO" id="GO:0060088">
    <property type="term" value="P:auditory receptor cell stereocilium organization"/>
    <property type="evidence" value="ECO:0000315"/>
    <property type="project" value="MGI"/>
</dbReference>
<dbReference type="GO" id="GO:0048870">
    <property type="term" value="P:cell motility"/>
    <property type="evidence" value="ECO:0000266"/>
    <property type="project" value="MGI"/>
</dbReference>
<dbReference type="GO" id="GO:0050957">
    <property type="term" value="P:equilibrioception"/>
    <property type="evidence" value="ECO:0007669"/>
    <property type="project" value="Ensembl"/>
</dbReference>
<dbReference type="GO" id="GO:0050885">
    <property type="term" value="P:neuromuscular process controlling balance"/>
    <property type="evidence" value="ECO:0000315"/>
    <property type="project" value="MGI"/>
</dbReference>
<dbReference type="GO" id="GO:0045494">
    <property type="term" value="P:photoreceptor cell maintenance"/>
    <property type="evidence" value="ECO:0007669"/>
    <property type="project" value="Ensembl"/>
</dbReference>
<dbReference type="GO" id="GO:0010592">
    <property type="term" value="P:positive regulation of lamellipodium assembly"/>
    <property type="evidence" value="ECO:0000266"/>
    <property type="project" value="MGI"/>
</dbReference>
<dbReference type="GO" id="GO:0007605">
    <property type="term" value="P:sensory perception of sound"/>
    <property type="evidence" value="ECO:0000315"/>
    <property type="project" value="MGI"/>
</dbReference>
<dbReference type="GO" id="GO:0007601">
    <property type="term" value="P:visual perception"/>
    <property type="evidence" value="ECO:0007669"/>
    <property type="project" value="UniProtKB-KW"/>
</dbReference>
<dbReference type="FunFam" id="1.20.140.150:FF:000045">
    <property type="entry name" value="Clarin 1"/>
    <property type="match status" value="1"/>
</dbReference>
<dbReference type="Gene3D" id="1.20.140.150">
    <property type="match status" value="1"/>
</dbReference>
<dbReference type="InterPro" id="IPR026748">
    <property type="entry name" value="Clarin"/>
</dbReference>
<dbReference type="PANTHER" id="PTHR31548">
    <property type="entry name" value="CLARIN"/>
    <property type="match status" value="1"/>
</dbReference>
<dbReference type="PANTHER" id="PTHR31548:SF4">
    <property type="entry name" value="CLARIN-1"/>
    <property type="match status" value="1"/>
</dbReference>
<protein>
    <recommendedName>
        <fullName>Clarin-1</fullName>
    </recommendedName>
    <alternativeName>
        <fullName>Usher syndrome type-3 protein homolog</fullName>
    </alternativeName>
</protein>
<proteinExistence type="evidence at transcript level"/>
<evidence type="ECO:0000250" key="1">
    <source>
        <dbReference type="UniProtKB" id="P58418"/>
    </source>
</evidence>
<evidence type="ECO:0000255" key="2"/>
<evidence type="ECO:0000269" key="3">
    <source>
    </source>
</evidence>
<evidence type="ECO:0000303" key="4">
    <source>
    </source>
</evidence>
<evidence type="ECO:0000305" key="5"/>
<accession>Q8K445</accession>
<accession>Q8K446</accession>
<keyword id="KW-0025">Alternative splicing</keyword>
<keyword id="KW-1003">Cell membrane</keyword>
<keyword id="KW-0325">Glycoprotein</keyword>
<keyword id="KW-1009">Hearing</keyword>
<keyword id="KW-0472">Membrane</keyword>
<keyword id="KW-1185">Reference proteome</keyword>
<keyword id="KW-0716">Sensory transduction</keyword>
<keyword id="KW-0812">Transmembrane</keyword>
<keyword id="KW-1133">Transmembrane helix</keyword>
<keyword id="KW-0844">Vision</keyword>
<name>CLRN1_MOUSE</name>
<gene>
    <name type="primary">Clrn1</name>
    <name type="synonym">Ush3a</name>
</gene>
<reference key="1">
    <citation type="journal article" date="2002" name="Eur. J. Hum. Genet.">
        <title>USH3A transcripts encode clarin-1, a four-transmembrane-domain protein with a possible role in sensory synapses.</title>
        <authorList>
            <person name="Adato A."/>
            <person name="Vreugde S."/>
            <person name="Joensuu T."/>
            <person name="Avidan N."/>
            <person name="Hamalainen R."/>
            <person name="Belenkiy O."/>
            <person name="Olender T."/>
            <person name="Bonne-Tamir B."/>
            <person name="Ben-Asher E."/>
            <person name="Espinos C."/>
            <person name="Millan J.M."/>
            <person name="Lehesjoki A.-E."/>
            <person name="Flannery J.G."/>
            <person name="Avraham K.B."/>
            <person name="Pietrokovski S."/>
            <person name="Sankila E.-M."/>
            <person name="Beckmann J.S."/>
            <person name="Lancet D."/>
        </authorList>
    </citation>
    <scope>NUCLEOTIDE SEQUENCE [MRNA] (ISOFORMS 1 AND 2)</scope>
    <scope>FUNCTION</scope>
    <source>
        <strain>C57BL/6J</strain>
        <tissue>Inner ear</tissue>
        <tissue>Thymus</tissue>
    </source>
</reference>
<sequence>MPSQQKKIIFCMAGVLSFLCALGVVTAVGTPLWVKATILCKTGALLVNASGKELDKFMGEMQYGLFHGEGVRQCGLGARPFRFSFFPDLVQAIPVSIHINIILFSMILVVLTMVGTAFFMYNAFGKPFETLHGPLGLYLVSFISGSCGCLVMILFASEVKVHRLSEKIANFKEGTYAYRTQNENYTTSFWVVFICFFVHFLNGLLIRLAGFQFPFTKSKETETTNVASDLMY</sequence>
<feature type="chain" id="PRO_0000274695" description="Clarin-1">
    <location>
        <begin position="1"/>
        <end position="232"/>
    </location>
</feature>
<feature type="transmembrane region" description="Helical" evidence="2">
    <location>
        <begin position="8"/>
        <end position="28"/>
    </location>
</feature>
<feature type="transmembrane region" description="Helical" evidence="2">
    <location>
        <begin position="101"/>
        <end position="121"/>
    </location>
</feature>
<feature type="transmembrane region" description="Helical" evidence="2">
    <location>
        <begin position="135"/>
        <end position="155"/>
    </location>
</feature>
<feature type="transmembrane region" description="Helical" evidence="2">
    <location>
        <begin position="186"/>
        <end position="206"/>
    </location>
</feature>
<feature type="glycosylation site" description="N-linked (GlcNAc...) asparagine" evidence="2">
    <location>
        <position position="48"/>
    </location>
</feature>
<feature type="glycosylation site" description="N-linked (GlcNAc...) asparagine" evidence="2">
    <location>
        <position position="184"/>
    </location>
</feature>
<feature type="splice variant" id="VSP_022870" description="In isoform 2." evidence="4">
    <original>SF</original>
    <variation>SSRSMKERYSLYEDKGETAV</variation>
    <location>
        <begin position="84"/>
        <end position="85"/>
    </location>
</feature>
<comment type="function">
    <text evidence="3">May have a role in the excitatory ribbon synapse junctions between hair cells and cochlear ganglion cells and presumably also in analogous synapses within the retina.</text>
</comment>
<comment type="subcellular location">
    <subcellularLocation>
        <location evidence="1">Cell membrane</location>
        <topology evidence="2">Multi-pass membrane protein</topology>
    </subcellularLocation>
</comment>
<comment type="alternative products">
    <event type="alternative splicing"/>
    <isoform>
        <id>Q8K445-1</id>
        <name>1</name>
        <sequence type="displayed"/>
    </isoform>
    <isoform>
        <id>Q8K445-2</id>
        <name>2</name>
        <sequence type="described" ref="VSP_022870"/>
    </isoform>
</comment>
<comment type="similarity">
    <text evidence="5">Belongs to the clarin family.</text>
</comment>
<organism>
    <name type="scientific">Mus musculus</name>
    <name type="common">Mouse</name>
    <dbReference type="NCBI Taxonomy" id="10090"/>
    <lineage>
        <taxon>Eukaryota</taxon>
        <taxon>Metazoa</taxon>
        <taxon>Chordata</taxon>
        <taxon>Craniata</taxon>
        <taxon>Vertebrata</taxon>
        <taxon>Euteleostomi</taxon>
        <taxon>Mammalia</taxon>
        <taxon>Eutheria</taxon>
        <taxon>Euarchontoglires</taxon>
        <taxon>Glires</taxon>
        <taxon>Rodentia</taxon>
        <taxon>Myomorpha</taxon>
        <taxon>Muroidea</taxon>
        <taxon>Muridae</taxon>
        <taxon>Murinae</taxon>
        <taxon>Mus</taxon>
        <taxon>Mus</taxon>
    </lineage>
</organism>